<dbReference type="EC" id="2.7.7.7" evidence="1"/>
<dbReference type="EC" id="2.7.7.49" evidence="1"/>
<dbReference type="EC" id="3.1.26.4" evidence="1"/>
<dbReference type="EMBL" id="AB032431">
    <property type="protein sequence ID" value="BAA89322.1"/>
    <property type="molecule type" value="Genomic_DNA"/>
</dbReference>
<dbReference type="Proteomes" id="UP000001388">
    <property type="component" value="Segment"/>
</dbReference>
<dbReference type="GO" id="GO:0003677">
    <property type="term" value="F:DNA binding"/>
    <property type="evidence" value="ECO:0007669"/>
    <property type="project" value="UniProtKB-UniRule"/>
</dbReference>
<dbReference type="GO" id="GO:0003887">
    <property type="term" value="F:DNA-directed DNA polymerase activity"/>
    <property type="evidence" value="ECO:0007669"/>
    <property type="project" value="UniProtKB-UniRule"/>
</dbReference>
<dbReference type="GO" id="GO:0046872">
    <property type="term" value="F:metal ion binding"/>
    <property type="evidence" value="ECO:0007669"/>
    <property type="project" value="UniProtKB-UniRule"/>
</dbReference>
<dbReference type="GO" id="GO:0003964">
    <property type="term" value="F:RNA-directed DNA polymerase activity"/>
    <property type="evidence" value="ECO:0007669"/>
    <property type="project" value="UniProtKB-UniRule"/>
</dbReference>
<dbReference type="GO" id="GO:0004523">
    <property type="term" value="F:RNA-DNA hybrid ribonuclease activity"/>
    <property type="evidence" value="ECO:0007669"/>
    <property type="project" value="UniProtKB-UniRule"/>
</dbReference>
<dbReference type="GO" id="GO:0006260">
    <property type="term" value="P:DNA replication"/>
    <property type="evidence" value="ECO:0007669"/>
    <property type="project" value="UniProtKB-UniRule"/>
</dbReference>
<dbReference type="GO" id="GO:0052170">
    <property type="term" value="P:symbiont-mediated suppression of host innate immune response"/>
    <property type="evidence" value="ECO:0007669"/>
    <property type="project" value="UniProtKB-UniRule"/>
</dbReference>
<dbReference type="FunFam" id="3.30.70.270:FF:000009">
    <property type="entry name" value="Protein P"/>
    <property type="match status" value="1"/>
</dbReference>
<dbReference type="Gene3D" id="3.30.70.270">
    <property type="match status" value="1"/>
</dbReference>
<dbReference type="HAMAP" id="MF_04073">
    <property type="entry name" value="HBV_DPOL"/>
    <property type="match status" value="1"/>
</dbReference>
<dbReference type="InterPro" id="IPR043502">
    <property type="entry name" value="DNA/RNA_pol_sf"/>
</dbReference>
<dbReference type="InterPro" id="IPR001462">
    <property type="entry name" value="DNApol_viral_C"/>
</dbReference>
<dbReference type="InterPro" id="IPR000201">
    <property type="entry name" value="DNApol_viral_N"/>
</dbReference>
<dbReference type="InterPro" id="IPR037531">
    <property type="entry name" value="HBV_DPOL"/>
</dbReference>
<dbReference type="InterPro" id="IPR043128">
    <property type="entry name" value="Rev_trsase/Diguanyl_cyclase"/>
</dbReference>
<dbReference type="InterPro" id="IPR000477">
    <property type="entry name" value="RT_dom"/>
</dbReference>
<dbReference type="InterPro" id="IPR051320">
    <property type="entry name" value="Viral_Replic_Matur_Polypro"/>
</dbReference>
<dbReference type="PANTHER" id="PTHR33064">
    <property type="entry name" value="POL PROTEIN"/>
    <property type="match status" value="1"/>
</dbReference>
<dbReference type="PANTHER" id="PTHR33064:SF37">
    <property type="entry name" value="RIBONUCLEASE H"/>
    <property type="match status" value="1"/>
</dbReference>
<dbReference type="Pfam" id="PF00336">
    <property type="entry name" value="DNA_pol_viral_C"/>
    <property type="match status" value="1"/>
</dbReference>
<dbReference type="Pfam" id="PF00242">
    <property type="entry name" value="DNA_pol_viral_N"/>
    <property type="match status" value="1"/>
</dbReference>
<dbReference type="Pfam" id="PF00078">
    <property type="entry name" value="RVT_1"/>
    <property type="match status" value="1"/>
</dbReference>
<dbReference type="SUPFAM" id="SSF56672">
    <property type="entry name" value="DNA/RNA polymerases"/>
    <property type="match status" value="1"/>
</dbReference>
<dbReference type="PROSITE" id="PS50878">
    <property type="entry name" value="RT_POL"/>
    <property type="match status" value="1"/>
</dbReference>
<feature type="chain" id="PRO_0000323272" description="Protein P">
    <location>
        <begin position="1"/>
        <end position="842"/>
    </location>
</feature>
<feature type="domain" description="Reverse transcriptase" evidence="1">
    <location>
        <begin position="356"/>
        <end position="599"/>
    </location>
</feature>
<feature type="region of interest" description="Terminal protein domain (TP)" evidence="1">
    <location>
        <begin position="1"/>
        <end position="177"/>
    </location>
</feature>
<feature type="region of interest" description="Spacer" evidence="1">
    <location>
        <begin position="178"/>
        <end position="345"/>
    </location>
</feature>
<feature type="region of interest" description="Disordered" evidence="2">
    <location>
        <begin position="186"/>
        <end position="273"/>
    </location>
</feature>
<feature type="region of interest" description="Polymerase/reverse transcriptase domain (RT)" evidence="1">
    <location>
        <begin position="346"/>
        <end position="689"/>
    </location>
</feature>
<feature type="compositionally biased region" description="Polar residues" evidence="2">
    <location>
        <begin position="223"/>
        <end position="239"/>
    </location>
</feature>
<feature type="binding site" evidence="1">
    <location>
        <position position="428"/>
    </location>
    <ligand>
        <name>Mg(2+)</name>
        <dbReference type="ChEBI" id="CHEBI:18420"/>
        <note>catalytic</note>
    </ligand>
</feature>
<feature type="binding site" evidence="1">
    <location>
        <position position="550"/>
    </location>
    <ligand>
        <name>Mg(2+)</name>
        <dbReference type="ChEBI" id="CHEBI:18420"/>
        <note>catalytic</note>
    </ligand>
</feature>
<feature type="binding site" evidence="1">
    <location>
        <position position="551"/>
    </location>
    <ligand>
        <name>Mg(2+)</name>
        <dbReference type="ChEBI" id="CHEBI:18420"/>
        <note>catalytic</note>
    </ligand>
</feature>
<feature type="site" description="Priming of reverse-transcription by covalently linking the first nucleotide of the (-)DNA" evidence="1">
    <location>
        <position position="63"/>
    </location>
</feature>
<gene>
    <name evidence="1" type="primary">P</name>
</gene>
<proteinExistence type="inferred from homology"/>
<comment type="function">
    <text evidence="1">Multifunctional enzyme that converts the viral RNA genome into dsDNA in viral cytoplasmic capsids. This enzyme displays a DNA polymerase activity that can copy either DNA or RNA templates, and a ribonuclease H (RNase H) activity that cleaves the RNA strand of RNA-DNA heteroduplexes in a partially processive 3'- to 5'-endonucleasic mode. Neo-synthesized pregenomic RNA (pgRNA) are encapsidated together with the P protein, and reverse-transcribed inside the nucleocapsid. Initiation of reverse-transcription occurs first by binding the epsilon loop on the pgRNA genome, and is initiated by protein priming, thereby the 5'-end of (-)DNA is covalently linked to P protein. Partial (+)DNA is synthesized from the (-)DNA template and generates the relaxed circular DNA (RC-DNA) genome. After budding and infection, the RC-DNA migrates in the nucleus, and is converted into a plasmid-like covalently closed circular DNA (cccDNA). The activity of P protein does not seem to be necessary for cccDNA generation, and is presumably released from (+)DNA by host nuclear DNA repair machinery.</text>
</comment>
<comment type="catalytic activity">
    <reaction evidence="1">
        <text>DNA(n) + a 2'-deoxyribonucleoside 5'-triphosphate = DNA(n+1) + diphosphate</text>
        <dbReference type="Rhea" id="RHEA:22508"/>
        <dbReference type="Rhea" id="RHEA-COMP:17339"/>
        <dbReference type="Rhea" id="RHEA-COMP:17340"/>
        <dbReference type="ChEBI" id="CHEBI:33019"/>
        <dbReference type="ChEBI" id="CHEBI:61560"/>
        <dbReference type="ChEBI" id="CHEBI:173112"/>
        <dbReference type="EC" id="2.7.7.7"/>
    </reaction>
</comment>
<comment type="catalytic activity">
    <reaction evidence="1">
        <text>DNA(n) + a 2'-deoxyribonucleoside 5'-triphosphate = DNA(n+1) + diphosphate</text>
        <dbReference type="Rhea" id="RHEA:22508"/>
        <dbReference type="Rhea" id="RHEA-COMP:17339"/>
        <dbReference type="Rhea" id="RHEA-COMP:17340"/>
        <dbReference type="ChEBI" id="CHEBI:33019"/>
        <dbReference type="ChEBI" id="CHEBI:61560"/>
        <dbReference type="ChEBI" id="CHEBI:173112"/>
        <dbReference type="EC" id="2.7.7.49"/>
    </reaction>
</comment>
<comment type="catalytic activity">
    <reaction evidence="1">
        <text>Endonucleolytic cleavage to 5'-phosphomonoester.</text>
        <dbReference type="EC" id="3.1.26.4"/>
    </reaction>
</comment>
<comment type="activity regulation">
    <text evidence="1">Activated by host HSP70 and HSP40 in vitro to be able to bind the epsilon loop of the pgRNA. Because deletion of the RNase H region renders the protein partly chaperone-independent, the chaperones may be needed indirectly to relieve occlusion of the RNA-binding site by this domain. Inhibited by several reverse-transcriptase inhibitors: Lamivudine, Adefovir and Entecavir.</text>
</comment>
<comment type="domain">
    <text evidence="1">Terminal protein domain (TP) is hepadnavirus-specific. Spacer domain is highly variable and separates the TP and RT domains. Polymerase/reverse-transcriptase domain (RT) and ribonuclease H domain (RH) are similar to retrovirus reverse transcriptase/RNase H.</text>
</comment>
<comment type="domain">
    <text evidence="1">The polymerase/reverse transcriptase (RT) and ribonuclease H (RH) domains are structured in five subdomains: finger, palm, thumb, connection and RNase H. Within the palm subdomain, the 'primer grip' region is thought to be involved in the positioning of the primer terminus for accommodating the incoming nucleotide. The RH domain stabilizes the association of RT with primer-template.</text>
</comment>
<comment type="miscellaneous">
    <text evidence="1">Hepadnaviral virions contain probably just one P protein molecule per particle.</text>
</comment>
<comment type="similarity">
    <text evidence="1">Belongs to the hepadnaviridae P protein family.</text>
</comment>
<sequence length="842" mass="94585">MPLSYQHFRRILLLDEEAGPLEEELPRLADEDLNRRVAEDLNLQLPNVSIPWTHKVGNFTGLYSSTIPVFNPNWKTPSFPDIHLHQDIINKCEQFVGPLTVNEKRRLNLVMPARFFPISTKYLPLEKGIKPYYPDNVVNHYFQTRHYLHTLWKAGILYKRETTRSASFCGSPYSWEQELHHGAFLDGPSRMGEESFHHQSSGIFSRPPVGSSIQSKHQKSRLGPQSQQRPLDGSQQGRSGSIRAGVHSPTRRPFGVEPSGSRHAKNIASRSASCLHQSAVRKAAYPNHSTFERHSSSGHAVEFHNISPSSAGSQSKRPVFSCWWLQFRNSEPCSDYCLTHLVNLLEDWGPCTEHGKHHIRIPRTPARITGGVFLVDKNPHNTAESRLVVDFSQFSRGSSRVSWPKFAVPNLQSLTNLLSSNLSWLSLDVSAAFYHLPLHPAAMPHLLVGSSGLSRYVARLSSNSRIINHQYGTLPNLHDSCSRNLYVSLMLLFKTFGRKLHLYSHPIIMGFRKIPMGVGLSPFLLAQFTSAICSVVRRAFPHCLAFSYMDDVVLGAKSVQHLESLYTSVTNFLLSLGIHLNPNKTKRWGYSLNFMGYVIGSWGSLPQEHIIMKIKDCFRKLPVNRPIDWKVCQRIVGLLGFAAPFTQCGYPALMPLYACIQSKQAFTFSPTYKAFLCKQYLNLYPVARQRPGLCQVFADATPTGWGLAIGHQRMRGTFMAPLPIHTAELLAACFARSRSGAKLIGTDNSVVLSRKYTSFPWLLGCAANWILRGTSFVYVPSALNPADDPSRGRLGIYRPLLRLPFQPSTGRTSLYAVSPSVPSHLPDRVHFASPLHVAWRPP</sequence>
<evidence type="ECO:0000255" key="1">
    <source>
        <dbReference type="HAMAP-Rule" id="MF_04073"/>
    </source>
</evidence>
<evidence type="ECO:0000256" key="2">
    <source>
        <dbReference type="SAM" id="MobiDB-lite"/>
    </source>
</evidence>
<organismHost>
    <name type="scientific">Homo sapiens</name>
    <name type="common">Human</name>
    <dbReference type="NCBI Taxonomy" id="9606"/>
</organismHost>
<organismHost>
    <name type="scientific">Pan troglodytes</name>
    <name type="common">Chimpanzee</name>
    <dbReference type="NCBI Taxonomy" id="9598"/>
</organismHost>
<protein>
    <recommendedName>
        <fullName evidence="1">Protein P</fullName>
    </recommendedName>
    <domain>
        <recommendedName>
            <fullName evidence="1">DNA-directed DNA polymerase</fullName>
            <ecNumber evidence="1">2.7.7.7</ecNumber>
        </recommendedName>
    </domain>
    <domain>
        <recommendedName>
            <fullName evidence="1">RNA-directed DNA polymerase</fullName>
            <ecNumber evidence="1">2.7.7.49</ecNumber>
        </recommendedName>
    </domain>
    <domain>
        <recommendedName>
            <fullName evidence="1">Ribonuclease H</fullName>
            <ecNumber evidence="1">3.1.26.4</ecNumber>
        </recommendedName>
    </domain>
</protein>
<keyword id="KW-0235">DNA replication</keyword>
<keyword id="KW-0238">DNA-binding</keyword>
<keyword id="KW-0239">DNA-directed DNA polymerase</keyword>
<keyword id="KW-0255">Endonuclease</keyword>
<keyword id="KW-0945">Host-virus interaction</keyword>
<keyword id="KW-0378">Hydrolase</keyword>
<keyword id="KW-1090">Inhibition of host innate immune response by virus</keyword>
<keyword id="KW-1113">Inhibition of host RLR pathway by virus</keyword>
<keyword id="KW-0460">Magnesium</keyword>
<keyword id="KW-0479">Metal-binding</keyword>
<keyword id="KW-0511">Multifunctional enzyme</keyword>
<keyword id="KW-0540">Nuclease</keyword>
<keyword id="KW-0548">Nucleotidyltransferase</keyword>
<keyword id="KW-0695">RNA-directed DNA polymerase</keyword>
<keyword id="KW-0808">Transferase</keyword>
<keyword id="KW-0899">Viral immunoevasion</keyword>
<organism>
    <name type="scientific">Hepatitis B virus genotype E (isolate Chimpanzee/Ch195/1999)</name>
    <name type="common">HBV-E</name>
    <dbReference type="NCBI Taxonomy" id="489497"/>
    <lineage>
        <taxon>Viruses</taxon>
        <taxon>Riboviria</taxon>
        <taxon>Pararnavirae</taxon>
        <taxon>Artverviricota</taxon>
        <taxon>Revtraviricetes</taxon>
        <taxon>Blubervirales</taxon>
        <taxon>Hepadnaviridae</taxon>
        <taxon>Orthohepadnavirus</taxon>
        <taxon>Hepatitis B virus</taxon>
        <taxon>hepatitis B virus genotype E</taxon>
    </lineage>
</organism>
<reference key="1">
    <citation type="journal article" date="2000" name="Virology">
        <title>Full-genome sequence analyses of hepatitis B virus (HBV) strains recovered from chimpanzees infected in the wild: implications for an origin of HBV.</title>
        <authorList>
            <person name="Takahashi K."/>
            <person name="Brotman B."/>
            <person name="Usuda S."/>
            <person name="Mishiro S."/>
            <person name="Prince A.M."/>
        </authorList>
    </citation>
    <scope>NUCLEOTIDE SEQUENCE [GENOMIC DNA]</scope>
</reference>
<reference key="2">
    <citation type="journal article" date="2007" name="World J. Gastroenterol.">
        <title>Hepatitis B virus replication.</title>
        <authorList>
            <person name="Beck J."/>
            <person name="Nassal M."/>
        </authorList>
    </citation>
    <scope>REVIEW</scope>
</reference>
<name>DPOL_HBVE3</name>
<accession>Q9QAW8</accession>